<name>O266_CONAA</name>
<reference key="1">
    <citation type="journal article" date="2019" name="J. Proteomics">
        <title>Cone snail prolyl-4-hydroxylase alpha-subunit sequences derived from transcriptomic data and mass spectrometric analysis of variable proline hydroxylation in C. amadis venom.</title>
        <authorList>
            <person name="Vijayasarathy M."/>
            <person name="Balaram P."/>
        </authorList>
    </citation>
    <scope>NUCLEOTIDE SEQUENCE [MRNA]</scope>
    <scope>PROTEIN SEQUENCE OF 46-77</scope>
    <scope>SUBCELLULAR LOCATION</scope>
    <scope>IDENTIFICATION BY MASS SPECTROMETRY</scope>
    <scope>HYDROXYLATION AT PRO-76</scope>
    <scope>GAMMA-CARBOXYGLUTAMATION AT GLU-56; GLU-59 AND GLU-71</scope>
    <source>
        <tissue>Venom</tissue>
        <tissue>Venom duct</tissue>
    </source>
</reference>
<proteinExistence type="evidence at protein level"/>
<feature type="signal peptide" evidence="3">
    <location>
        <begin position="1"/>
        <end position="19"/>
    </location>
</feature>
<feature type="propeptide" id="PRO_0000453603" evidence="6">
    <location>
        <begin position="20"/>
        <end position="45"/>
    </location>
</feature>
<feature type="peptide" id="PRO_5018236541" description="Gamma-conotoxin-like Am6.6" evidence="4">
    <location>
        <begin position="46"/>
        <end position="77"/>
    </location>
</feature>
<feature type="propeptide" id="PRO_0000453604" evidence="6">
    <location>
        <begin position="78"/>
        <end position="80"/>
    </location>
</feature>
<feature type="modified residue" description="4-carboxyglutamate" evidence="4">
    <location>
        <position position="56"/>
    </location>
</feature>
<feature type="modified residue" description="4-carboxyglutamate" evidence="4">
    <location>
        <position position="59"/>
    </location>
</feature>
<feature type="modified residue" description="4-carboxyglutamate" evidence="4">
    <location>
        <position position="71"/>
    </location>
</feature>
<feature type="modified residue" description="4-hydroxyproline" evidence="4">
    <location>
        <position position="76"/>
    </location>
</feature>
<feature type="disulfide bond" evidence="2">
    <location>
        <begin position="47"/>
        <end position="61"/>
    </location>
</feature>
<feature type="disulfide bond" evidence="2">
    <location>
        <begin position="54"/>
        <end position="65"/>
    </location>
</feature>
<feature type="disulfide bond" evidence="2">
    <location>
        <begin position="60"/>
        <end position="70"/>
    </location>
</feature>
<keyword id="KW-0165">Cleavage on pair of basic residues</keyword>
<keyword id="KW-0903">Direct protein sequencing</keyword>
<keyword id="KW-1015">Disulfide bond</keyword>
<keyword id="KW-0301">Gamma-carboxyglutamic acid</keyword>
<keyword id="KW-0379">Hydroxylation</keyword>
<keyword id="KW-0872">Ion channel impairing toxin</keyword>
<keyword id="KW-0960">Knottin</keyword>
<keyword id="KW-0964">Secreted</keyword>
<keyword id="KW-0732">Signal</keyword>
<keyword id="KW-0800">Toxin</keyword>
<sequence>MEKLTILLLVAAILMSTQALNQEQRQQAKINLLSKKKPSAERWRRGCTWWFGRCAEDGECCSNSCDQTYCELYAFPSRAI</sequence>
<dbReference type="EMBL" id="MH282827">
    <property type="protein sequence ID" value="AYP73034.1"/>
    <property type="molecule type" value="mRNA"/>
</dbReference>
<dbReference type="GO" id="GO:0005576">
    <property type="term" value="C:extracellular region"/>
    <property type="evidence" value="ECO:0007669"/>
    <property type="project" value="UniProtKB-SubCell"/>
</dbReference>
<dbReference type="GO" id="GO:0008200">
    <property type="term" value="F:ion channel inhibitor activity"/>
    <property type="evidence" value="ECO:0007669"/>
    <property type="project" value="InterPro"/>
</dbReference>
<dbReference type="GO" id="GO:0090729">
    <property type="term" value="F:toxin activity"/>
    <property type="evidence" value="ECO:0007669"/>
    <property type="project" value="UniProtKB-KW"/>
</dbReference>
<dbReference type="InterPro" id="IPR004214">
    <property type="entry name" value="Conotoxin"/>
</dbReference>
<dbReference type="Pfam" id="PF02950">
    <property type="entry name" value="Conotoxin"/>
    <property type="match status" value="1"/>
</dbReference>
<comment type="function">
    <text evidence="1">Gamma-conotoxins may act on voltage-gated non-specific cation pacemaker channels (HCN).</text>
</comment>
<comment type="subcellular location">
    <subcellularLocation>
        <location evidence="4">Secreted</location>
    </subcellularLocation>
</comment>
<comment type="tissue specificity">
    <text evidence="6">Expressed by the venom duct.</text>
</comment>
<comment type="domain">
    <text evidence="5">The cysteine framework is VI/VII (C-C-CC-C-C).</text>
</comment>
<comment type="domain">
    <text evidence="5">The presence of a 'disulfide through disulfide knot' structurally defines this protein as a knottin.</text>
</comment>
<comment type="similarity">
    <text evidence="5">Belongs to the conotoxin O2 family.</text>
</comment>
<organism>
    <name type="scientific">Conus amadis</name>
    <name type="common">Amadis cone</name>
    <dbReference type="NCBI Taxonomy" id="198732"/>
    <lineage>
        <taxon>Eukaryota</taxon>
        <taxon>Metazoa</taxon>
        <taxon>Spiralia</taxon>
        <taxon>Lophotrochozoa</taxon>
        <taxon>Mollusca</taxon>
        <taxon>Gastropoda</taxon>
        <taxon>Caenogastropoda</taxon>
        <taxon>Neogastropoda</taxon>
        <taxon>Conoidea</taxon>
        <taxon>Conidae</taxon>
        <taxon>Conus</taxon>
        <taxon>Leptoconus</taxon>
    </lineage>
</organism>
<protein>
    <recommendedName>
        <fullName evidence="5">Gamma-conotoxin-like Am6.6</fullName>
    </recommendedName>
</protein>
<evidence type="ECO:0000250" key="1">
    <source>
        <dbReference type="UniProtKB" id="P56711"/>
    </source>
</evidence>
<evidence type="ECO:0000250" key="2">
    <source>
        <dbReference type="UniProtKB" id="Q26443"/>
    </source>
</evidence>
<evidence type="ECO:0000255" key="3"/>
<evidence type="ECO:0000269" key="4">
    <source>
    </source>
</evidence>
<evidence type="ECO:0000305" key="5"/>
<evidence type="ECO:0000305" key="6">
    <source>
    </source>
</evidence>
<accession>A0A3G3C7V6</accession>